<keyword id="KW-0687">Ribonucleoprotein</keyword>
<keyword id="KW-0689">Ribosomal protein</keyword>
<feature type="chain" id="PRO_1000128156" description="Small ribosomal subunit protein uS9">
    <location>
        <begin position="1"/>
        <end position="130"/>
    </location>
</feature>
<name>RS9_PSEPW</name>
<proteinExistence type="inferred from homology"/>
<protein>
    <recommendedName>
        <fullName evidence="1">Small ribosomal subunit protein uS9</fullName>
    </recommendedName>
    <alternativeName>
        <fullName evidence="2">30S ribosomal protein S9</fullName>
    </alternativeName>
</protein>
<organism>
    <name type="scientific">Pseudomonas putida (strain W619)</name>
    <dbReference type="NCBI Taxonomy" id="390235"/>
    <lineage>
        <taxon>Bacteria</taxon>
        <taxon>Pseudomonadati</taxon>
        <taxon>Pseudomonadota</taxon>
        <taxon>Gammaproteobacteria</taxon>
        <taxon>Pseudomonadales</taxon>
        <taxon>Pseudomonadaceae</taxon>
        <taxon>Pseudomonas</taxon>
    </lineage>
</organism>
<gene>
    <name evidence="1" type="primary">rpsI</name>
    <name type="ordered locus">PputW619_0923</name>
</gene>
<accession>B1J1W9</accession>
<sequence>MSATQNYGTGRRKTATARVFLRPGTGNISINNRPLDTFFGRETARMVVRQPLELTESTEKFDIYVTVAGGGVSGQAGAIRHGITRALMEYDETLRGALRRAGYVTRDAREVERKKVGLRKARKRPQYSKR</sequence>
<comment type="similarity">
    <text evidence="1">Belongs to the universal ribosomal protein uS9 family.</text>
</comment>
<evidence type="ECO:0000255" key="1">
    <source>
        <dbReference type="HAMAP-Rule" id="MF_00532"/>
    </source>
</evidence>
<evidence type="ECO:0000305" key="2"/>
<reference key="1">
    <citation type="submission" date="2008-02" db="EMBL/GenBank/DDBJ databases">
        <title>Complete sequence of Pseudomonas putida W619.</title>
        <authorList>
            <person name="Copeland A."/>
            <person name="Lucas S."/>
            <person name="Lapidus A."/>
            <person name="Barry K."/>
            <person name="Detter J.C."/>
            <person name="Glavina del Rio T."/>
            <person name="Dalin E."/>
            <person name="Tice H."/>
            <person name="Pitluck S."/>
            <person name="Chain P."/>
            <person name="Malfatti S."/>
            <person name="Shin M."/>
            <person name="Vergez L."/>
            <person name="Schmutz J."/>
            <person name="Larimer F."/>
            <person name="Land M."/>
            <person name="Hauser L."/>
            <person name="Kyrpides N."/>
            <person name="Kim E."/>
            <person name="Taghavi S."/>
            <person name="Vangronsveld D."/>
            <person name="van der Lelie D."/>
            <person name="Richardson P."/>
        </authorList>
    </citation>
    <scope>NUCLEOTIDE SEQUENCE [LARGE SCALE GENOMIC DNA]</scope>
    <source>
        <strain>W619</strain>
    </source>
</reference>
<dbReference type="EMBL" id="CP000949">
    <property type="protein sequence ID" value="ACA71428.1"/>
    <property type="molecule type" value="Genomic_DNA"/>
</dbReference>
<dbReference type="SMR" id="B1J1W9"/>
<dbReference type="STRING" id="390235.PputW619_0923"/>
<dbReference type="KEGG" id="ppw:PputW619_0923"/>
<dbReference type="eggNOG" id="COG0103">
    <property type="taxonomic scope" value="Bacteria"/>
</dbReference>
<dbReference type="HOGENOM" id="CLU_046483_2_1_6"/>
<dbReference type="OrthoDB" id="9803965at2"/>
<dbReference type="GO" id="GO:0022627">
    <property type="term" value="C:cytosolic small ribosomal subunit"/>
    <property type="evidence" value="ECO:0007669"/>
    <property type="project" value="TreeGrafter"/>
</dbReference>
<dbReference type="GO" id="GO:0003723">
    <property type="term" value="F:RNA binding"/>
    <property type="evidence" value="ECO:0007669"/>
    <property type="project" value="TreeGrafter"/>
</dbReference>
<dbReference type="GO" id="GO:0003735">
    <property type="term" value="F:structural constituent of ribosome"/>
    <property type="evidence" value="ECO:0007669"/>
    <property type="project" value="InterPro"/>
</dbReference>
<dbReference type="GO" id="GO:0006412">
    <property type="term" value="P:translation"/>
    <property type="evidence" value="ECO:0007669"/>
    <property type="project" value="UniProtKB-UniRule"/>
</dbReference>
<dbReference type="FunFam" id="3.30.230.10:FF:000001">
    <property type="entry name" value="30S ribosomal protein S9"/>
    <property type="match status" value="1"/>
</dbReference>
<dbReference type="Gene3D" id="3.30.230.10">
    <property type="match status" value="1"/>
</dbReference>
<dbReference type="HAMAP" id="MF_00532_B">
    <property type="entry name" value="Ribosomal_uS9_B"/>
    <property type="match status" value="1"/>
</dbReference>
<dbReference type="InterPro" id="IPR020568">
    <property type="entry name" value="Ribosomal_Su5_D2-typ_SF"/>
</dbReference>
<dbReference type="InterPro" id="IPR000754">
    <property type="entry name" value="Ribosomal_uS9"/>
</dbReference>
<dbReference type="InterPro" id="IPR023035">
    <property type="entry name" value="Ribosomal_uS9_bac/plastid"/>
</dbReference>
<dbReference type="InterPro" id="IPR020574">
    <property type="entry name" value="Ribosomal_uS9_CS"/>
</dbReference>
<dbReference type="InterPro" id="IPR014721">
    <property type="entry name" value="Ribsml_uS5_D2-typ_fold_subgr"/>
</dbReference>
<dbReference type="NCBIfam" id="NF001099">
    <property type="entry name" value="PRK00132.1"/>
    <property type="match status" value="1"/>
</dbReference>
<dbReference type="PANTHER" id="PTHR21569">
    <property type="entry name" value="RIBOSOMAL PROTEIN S9"/>
    <property type="match status" value="1"/>
</dbReference>
<dbReference type="PANTHER" id="PTHR21569:SF1">
    <property type="entry name" value="SMALL RIBOSOMAL SUBUNIT PROTEIN US9M"/>
    <property type="match status" value="1"/>
</dbReference>
<dbReference type="Pfam" id="PF00380">
    <property type="entry name" value="Ribosomal_S9"/>
    <property type="match status" value="1"/>
</dbReference>
<dbReference type="SUPFAM" id="SSF54211">
    <property type="entry name" value="Ribosomal protein S5 domain 2-like"/>
    <property type="match status" value="1"/>
</dbReference>
<dbReference type="PROSITE" id="PS00360">
    <property type="entry name" value="RIBOSOMAL_S9"/>
    <property type="match status" value="1"/>
</dbReference>